<organism>
    <name type="scientific">Solanum lycopersicum</name>
    <name type="common">Tomato</name>
    <name type="synonym">Lycopersicon esculentum</name>
    <dbReference type="NCBI Taxonomy" id="4081"/>
    <lineage>
        <taxon>Eukaryota</taxon>
        <taxon>Viridiplantae</taxon>
        <taxon>Streptophyta</taxon>
        <taxon>Embryophyta</taxon>
        <taxon>Tracheophyta</taxon>
        <taxon>Spermatophyta</taxon>
        <taxon>Magnoliopsida</taxon>
        <taxon>eudicotyledons</taxon>
        <taxon>Gunneridae</taxon>
        <taxon>Pentapetalae</taxon>
        <taxon>asterids</taxon>
        <taxon>lamiids</taxon>
        <taxon>Solanales</taxon>
        <taxon>Solanaceae</taxon>
        <taxon>Solanoideae</taxon>
        <taxon>Solaneae</taxon>
        <taxon>Solanum</taxon>
        <taxon>Solanum subgen. Lycopersicon</taxon>
    </lineage>
</organism>
<reference key="1">
    <citation type="journal article" date="2012" name="Nature">
        <title>The tomato genome sequence provides insights into fleshy fruit evolution.</title>
        <authorList>
            <consortium name="Tomato Genome Consortium"/>
        </authorList>
    </citation>
    <scope>NUCLEOTIDE SEQUENCE [LARGE SCALE GENOMIC DNA]</scope>
    <source>
        <strain>cv. Heinz 1706</strain>
    </source>
</reference>
<reference key="2">
    <citation type="journal article" date="2015" name="BMC Genomics">
        <title>Genome-wide identification and characterization of the bHLH gene family in tomato.</title>
        <authorList>
            <person name="Sun H."/>
            <person name="Fan H.J."/>
            <person name="Ling H.Q."/>
        </authorList>
    </citation>
    <scope>GENE FAMILY</scope>
    <scope>NOMENCLATURE</scope>
</reference>
<reference key="3">
    <citation type="journal article" date="2019" name="Plant Cell">
        <title>MYC2 regulates the termination of jasmonate signaling via an autoregulatory negative feedback loop.</title>
        <authorList>
            <person name="Liu Y."/>
            <person name="Du M."/>
            <person name="Deng L."/>
            <person name="Shen J."/>
            <person name="Fang M."/>
            <person name="Chen Q."/>
            <person name="Lu Y."/>
            <person name="Wang Q."/>
            <person name="Li C."/>
            <person name="Zhai Q."/>
        </authorList>
    </citation>
    <scope>FUNCTION</scope>
    <scope>INDUCTION</scope>
</reference>
<accession>A0A3Q7HES4</accession>
<proteinExistence type="evidence at transcript level"/>
<gene>
    <name evidence="5" type="primary">MTB2</name>
    <name evidence="4" type="synonym">BHLH133</name>
    <name evidence="6" type="ordered locus">Solyc05g050560</name>
</gene>
<dbReference type="EMBL" id="CM001068">
    <property type="status" value="NOT_ANNOTATED_CDS"/>
    <property type="molecule type" value="Genomic_DNA"/>
</dbReference>
<dbReference type="SMR" id="A0A3Q7HES4"/>
<dbReference type="FunCoup" id="A0A3Q7HES4">
    <property type="interactions" value="1552"/>
</dbReference>
<dbReference type="STRING" id="4081.A0A3Q7HES4"/>
<dbReference type="PaxDb" id="4081-Solyc05g050560.1.1"/>
<dbReference type="EnsemblPlants" id="Solyc05g050560.1.1">
    <property type="protein sequence ID" value="Solyc05g050560.1.1.1"/>
    <property type="gene ID" value="Solyc05g050560.1"/>
</dbReference>
<dbReference type="GeneID" id="101247327"/>
<dbReference type="Gramene" id="Solyc05g050560.1.1">
    <property type="protein sequence ID" value="Solyc05g050560.1.1.1"/>
    <property type="gene ID" value="Solyc05g050560.1"/>
</dbReference>
<dbReference type="KEGG" id="sly:101247327"/>
<dbReference type="InParanoid" id="A0A3Q7HES4"/>
<dbReference type="OMA" id="DTVYHTF"/>
<dbReference type="OrthoDB" id="677168at2759"/>
<dbReference type="Proteomes" id="UP000004994">
    <property type="component" value="Chromosome 5"/>
</dbReference>
<dbReference type="GO" id="GO:0005634">
    <property type="term" value="C:nucleus"/>
    <property type="evidence" value="ECO:0000318"/>
    <property type="project" value="GO_Central"/>
</dbReference>
<dbReference type="GO" id="GO:0003700">
    <property type="term" value="F:DNA-binding transcription factor activity"/>
    <property type="evidence" value="ECO:0000318"/>
    <property type="project" value="GO_Central"/>
</dbReference>
<dbReference type="GO" id="GO:0046983">
    <property type="term" value="F:protein dimerization activity"/>
    <property type="evidence" value="ECO:0007669"/>
    <property type="project" value="InterPro"/>
</dbReference>
<dbReference type="GO" id="GO:0000976">
    <property type="term" value="F:transcription cis-regulatory region binding"/>
    <property type="evidence" value="ECO:0000318"/>
    <property type="project" value="GO_Central"/>
</dbReference>
<dbReference type="GO" id="GO:0006952">
    <property type="term" value="P:defense response"/>
    <property type="evidence" value="ECO:0007669"/>
    <property type="project" value="UniProtKB-KW"/>
</dbReference>
<dbReference type="GO" id="GO:0031347">
    <property type="term" value="P:regulation of defense response"/>
    <property type="evidence" value="ECO:0000315"/>
    <property type="project" value="UniProtKB"/>
</dbReference>
<dbReference type="GO" id="GO:0006355">
    <property type="term" value="P:regulation of DNA-templated transcription"/>
    <property type="evidence" value="ECO:0000314"/>
    <property type="project" value="UniProtKB"/>
</dbReference>
<dbReference type="GO" id="GO:2000022">
    <property type="term" value="P:regulation of jasmonic acid mediated signaling pathway"/>
    <property type="evidence" value="ECO:0000315"/>
    <property type="project" value="UniProtKB"/>
</dbReference>
<dbReference type="CDD" id="cd11449">
    <property type="entry name" value="bHLH_AtAIB_like"/>
    <property type="match status" value="1"/>
</dbReference>
<dbReference type="Gene3D" id="4.10.280.10">
    <property type="entry name" value="Helix-loop-helix DNA-binding domain"/>
    <property type="match status" value="1"/>
</dbReference>
<dbReference type="InterPro" id="IPR045084">
    <property type="entry name" value="AIB/MYC-like"/>
</dbReference>
<dbReference type="InterPro" id="IPR011598">
    <property type="entry name" value="bHLH_dom"/>
</dbReference>
<dbReference type="InterPro" id="IPR036638">
    <property type="entry name" value="HLH_DNA-bd_sf"/>
</dbReference>
<dbReference type="InterPro" id="IPR025610">
    <property type="entry name" value="MYC/MYB_N"/>
</dbReference>
<dbReference type="PANTHER" id="PTHR11514">
    <property type="entry name" value="MYC"/>
    <property type="match status" value="1"/>
</dbReference>
<dbReference type="PANTHER" id="PTHR11514:SF47">
    <property type="entry name" value="TRANSCRIPTION FACTOR BHLH13"/>
    <property type="match status" value="1"/>
</dbReference>
<dbReference type="Pfam" id="PF14215">
    <property type="entry name" value="bHLH-MYC_N"/>
    <property type="match status" value="1"/>
</dbReference>
<dbReference type="Pfam" id="PF00010">
    <property type="entry name" value="HLH"/>
    <property type="match status" value="1"/>
</dbReference>
<dbReference type="SMART" id="SM00353">
    <property type="entry name" value="HLH"/>
    <property type="match status" value="1"/>
</dbReference>
<dbReference type="SUPFAM" id="SSF47459">
    <property type="entry name" value="HLH, helix-loop-helix DNA-binding domain"/>
    <property type="match status" value="1"/>
</dbReference>
<dbReference type="PROSITE" id="PS50888">
    <property type="entry name" value="BHLH"/>
    <property type="match status" value="1"/>
</dbReference>
<evidence type="ECO:0000255" key="1">
    <source>
        <dbReference type="PROSITE-ProRule" id="PRU00981"/>
    </source>
</evidence>
<evidence type="ECO:0000256" key="2">
    <source>
        <dbReference type="SAM" id="MobiDB-lite"/>
    </source>
</evidence>
<evidence type="ECO:0000269" key="3">
    <source>
    </source>
</evidence>
<evidence type="ECO:0000303" key="4">
    <source>
    </source>
</evidence>
<evidence type="ECO:0000303" key="5">
    <source>
    </source>
</evidence>
<evidence type="ECO:0000305" key="6"/>
<name>MTB2_SOLLC</name>
<keyword id="KW-1184">Jasmonic acid signaling pathway</keyword>
<keyword id="KW-0539">Nucleus</keyword>
<keyword id="KW-0611">Plant defense</keyword>
<keyword id="KW-1185">Reference proteome</keyword>
<keyword id="KW-0804">Transcription</keyword>
<keyword id="KW-0805">Transcription regulation</keyword>
<comment type="function">
    <text evidence="3">Transcription factor that negatively regulates jasmonate (JA) signaling (PubMed:30610166). Negatively regulates JA-dependent response to wounding, JA-induced expression of defense genes, JA-dependent responses against herbivorous insects, and JA-dependent resistance against Botrytis cinerea infection (PubMed:30610166). Plays a positive role in resistance against the bacterial pathogen Pseudomonas syringae pv tomato DC3000 (PubMed:30610166).</text>
</comment>
<comment type="subcellular location">
    <subcellularLocation>
        <location evidence="1">Nucleus</location>
    </subcellularLocation>
</comment>
<comment type="induction">
    <text evidence="3">Induced by wounding, feeding with herbivorous insects, infection with the fungal pathogen Botrytis cinerea and infection with the bacterial pathogen Pseudomonas syringae pv tomato DC3000.</text>
</comment>
<comment type="caution">
    <text evidence="1">Contains a degenerate basic motif not likely to bind DNA.</text>
</comment>
<protein>
    <recommendedName>
        <fullName evidence="5">Transcription factor MTB2</fullName>
    </recommendedName>
    <alternativeName>
        <fullName evidence="4">Basic helix-loop-helix protein 133</fullName>
    </alternativeName>
    <alternativeName>
        <fullName evidence="5">Protein MYC2-TARGETED BHLH 2</fullName>
    </alternativeName>
    <alternativeName>
        <fullName evidence="4">Transcription factor bHLH133</fullName>
    </alternativeName>
    <alternativeName>
        <fullName evidence="6">bHLH transcription factor bHLH133</fullName>
    </alternativeName>
</protein>
<sequence>MTMLWSDEDKTMVAAVLGTKAFDYLMSSLVSAECSLMAMGSDENLQNMLSDLVERPNASNFSWNYAIFWQISRSKLGELVLGWGDGCCREAREGEESELTRILNIRLADEAQQRMRKRVLQKLHMFFGGTDEDNYVSGLDKVTDTEMFFLASMYFSFPRGQGGPGKCFTAGKHVWLSDVMRSSVDYCSRSFLMKSAGMQTVVLIPTDIGVMELGSVRTIPESLELVHSIKSCFSSFLAQVRAKQAAPLAAVVAEKKNGNNSVFPSSFPFDQSKENPKIFGQNLESGSTEFREKLALRKPVDGPLEMYRNGNRAPIINTQNGVRPVSWASFGNVKPGNSVDLYSPQAPPNNLREFVNGGREELRLNSLQHQKPGGMQIDFTNSRPVVSPVPTVESEHSDVEVSCKEKHAGPADERRPRKRGRKPANGREEPLNHVEAERQRREKLNQRFYALRAVVPNISKMDKASLLGDAIAHITDMQKRIRDAEYKLEKRGSTSVDAADINIEAASDEVIVRARCPLGTHPVAKVVEAFKETQVSVVESKLAVGNDTVYHTFVVKSSGPEQLTKEKLMAAFAGESNSL</sequence>
<feature type="chain" id="PRO_0000447549" description="Transcription factor MTB2">
    <location>
        <begin position="1"/>
        <end position="579"/>
    </location>
</feature>
<feature type="domain" description="bHLH" evidence="1">
    <location>
        <begin position="428"/>
        <end position="477"/>
    </location>
</feature>
<feature type="region of interest" description="Disordered" evidence="2">
    <location>
        <begin position="373"/>
        <end position="439"/>
    </location>
</feature>
<feature type="region of interest" description="Basic motif; degenerate" evidence="1">
    <location>
        <begin position="428"/>
        <end position="441"/>
    </location>
</feature>
<feature type="region of interest" description="Helix-loop-helix motif" evidence="1">
    <location>
        <begin position="442"/>
        <end position="477"/>
    </location>
</feature>
<feature type="compositionally biased region" description="Low complexity" evidence="2">
    <location>
        <begin position="382"/>
        <end position="392"/>
    </location>
</feature>
<feature type="compositionally biased region" description="Basic and acidic residues" evidence="2">
    <location>
        <begin position="393"/>
        <end position="415"/>
    </location>
</feature>
<feature type="compositionally biased region" description="Basic and acidic residues" evidence="2">
    <location>
        <begin position="425"/>
        <end position="439"/>
    </location>
</feature>